<dbReference type="EMBL" id="CP001154">
    <property type="protein sequence ID" value="ACO73273.1"/>
    <property type="molecule type" value="Genomic_DNA"/>
</dbReference>
<dbReference type="RefSeq" id="WP_012695767.1">
    <property type="nucleotide sequence ID" value="NC_012559.1"/>
</dbReference>
<dbReference type="SMR" id="C1DAU2"/>
<dbReference type="STRING" id="557598.LHK_00278"/>
<dbReference type="GeneID" id="75109483"/>
<dbReference type="KEGG" id="lhk:LHK_00278"/>
<dbReference type="eggNOG" id="COG0522">
    <property type="taxonomic scope" value="Bacteria"/>
</dbReference>
<dbReference type="HOGENOM" id="CLU_092403_0_2_4"/>
<dbReference type="Proteomes" id="UP000002010">
    <property type="component" value="Chromosome"/>
</dbReference>
<dbReference type="GO" id="GO:0015935">
    <property type="term" value="C:small ribosomal subunit"/>
    <property type="evidence" value="ECO:0007669"/>
    <property type="project" value="InterPro"/>
</dbReference>
<dbReference type="GO" id="GO:0019843">
    <property type="term" value="F:rRNA binding"/>
    <property type="evidence" value="ECO:0007669"/>
    <property type="project" value="UniProtKB-UniRule"/>
</dbReference>
<dbReference type="GO" id="GO:0003735">
    <property type="term" value="F:structural constituent of ribosome"/>
    <property type="evidence" value="ECO:0007669"/>
    <property type="project" value="InterPro"/>
</dbReference>
<dbReference type="GO" id="GO:0042274">
    <property type="term" value="P:ribosomal small subunit biogenesis"/>
    <property type="evidence" value="ECO:0007669"/>
    <property type="project" value="TreeGrafter"/>
</dbReference>
<dbReference type="GO" id="GO:0006412">
    <property type="term" value="P:translation"/>
    <property type="evidence" value="ECO:0007669"/>
    <property type="project" value="UniProtKB-UniRule"/>
</dbReference>
<dbReference type="CDD" id="cd00165">
    <property type="entry name" value="S4"/>
    <property type="match status" value="1"/>
</dbReference>
<dbReference type="FunFam" id="1.10.1050.10:FF:000001">
    <property type="entry name" value="30S ribosomal protein S4"/>
    <property type="match status" value="1"/>
</dbReference>
<dbReference type="FunFam" id="3.10.290.10:FF:000001">
    <property type="entry name" value="30S ribosomal protein S4"/>
    <property type="match status" value="1"/>
</dbReference>
<dbReference type="Gene3D" id="1.10.1050.10">
    <property type="entry name" value="Ribosomal Protein S4 Delta 41, Chain A, domain 1"/>
    <property type="match status" value="1"/>
</dbReference>
<dbReference type="Gene3D" id="3.10.290.10">
    <property type="entry name" value="RNA-binding S4 domain"/>
    <property type="match status" value="1"/>
</dbReference>
<dbReference type="HAMAP" id="MF_01306_B">
    <property type="entry name" value="Ribosomal_uS4_B"/>
    <property type="match status" value="1"/>
</dbReference>
<dbReference type="InterPro" id="IPR022801">
    <property type="entry name" value="Ribosomal_uS4"/>
</dbReference>
<dbReference type="InterPro" id="IPR005709">
    <property type="entry name" value="Ribosomal_uS4_bac-type"/>
</dbReference>
<dbReference type="InterPro" id="IPR018079">
    <property type="entry name" value="Ribosomal_uS4_CS"/>
</dbReference>
<dbReference type="InterPro" id="IPR001912">
    <property type="entry name" value="Ribosomal_uS4_N"/>
</dbReference>
<dbReference type="InterPro" id="IPR002942">
    <property type="entry name" value="S4_RNA-bd"/>
</dbReference>
<dbReference type="InterPro" id="IPR036986">
    <property type="entry name" value="S4_RNA-bd_sf"/>
</dbReference>
<dbReference type="NCBIfam" id="NF003717">
    <property type="entry name" value="PRK05327.1"/>
    <property type="match status" value="1"/>
</dbReference>
<dbReference type="NCBIfam" id="TIGR01017">
    <property type="entry name" value="rpsD_bact"/>
    <property type="match status" value="1"/>
</dbReference>
<dbReference type="PANTHER" id="PTHR11831">
    <property type="entry name" value="30S 40S RIBOSOMAL PROTEIN"/>
    <property type="match status" value="1"/>
</dbReference>
<dbReference type="PANTHER" id="PTHR11831:SF4">
    <property type="entry name" value="SMALL RIBOSOMAL SUBUNIT PROTEIN US4M"/>
    <property type="match status" value="1"/>
</dbReference>
<dbReference type="Pfam" id="PF00163">
    <property type="entry name" value="Ribosomal_S4"/>
    <property type="match status" value="1"/>
</dbReference>
<dbReference type="Pfam" id="PF01479">
    <property type="entry name" value="S4"/>
    <property type="match status" value="1"/>
</dbReference>
<dbReference type="SMART" id="SM01390">
    <property type="entry name" value="Ribosomal_S4"/>
    <property type="match status" value="1"/>
</dbReference>
<dbReference type="SMART" id="SM00363">
    <property type="entry name" value="S4"/>
    <property type="match status" value="1"/>
</dbReference>
<dbReference type="SUPFAM" id="SSF55174">
    <property type="entry name" value="Alpha-L RNA-binding motif"/>
    <property type="match status" value="1"/>
</dbReference>
<dbReference type="PROSITE" id="PS00632">
    <property type="entry name" value="RIBOSOMAL_S4"/>
    <property type="match status" value="1"/>
</dbReference>
<dbReference type="PROSITE" id="PS50889">
    <property type="entry name" value="S4"/>
    <property type="match status" value="1"/>
</dbReference>
<feature type="chain" id="PRO_1000165407" description="Small ribosomal subunit protein uS4">
    <location>
        <begin position="1"/>
        <end position="206"/>
    </location>
</feature>
<feature type="domain" description="S4 RNA-binding" evidence="1">
    <location>
        <begin position="96"/>
        <end position="156"/>
    </location>
</feature>
<accession>C1DAU2</accession>
<reference key="1">
    <citation type="journal article" date="2009" name="PLoS Genet.">
        <title>The complete genome and proteome of Laribacter hongkongensis reveal potential mechanisms for adaptations to different temperatures and habitats.</title>
        <authorList>
            <person name="Woo P.C.Y."/>
            <person name="Lau S.K.P."/>
            <person name="Tse H."/>
            <person name="Teng J.L.L."/>
            <person name="Curreem S.O."/>
            <person name="Tsang A.K.L."/>
            <person name="Fan R.Y.Y."/>
            <person name="Wong G.K.M."/>
            <person name="Huang Y."/>
            <person name="Loman N.J."/>
            <person name="Snyder L.A.S."/>
            <person name="Cai J.J."/>
            <person name="Huang J.-D."/>
            <person name="Mak W."/>
            <person name="Pallen M.J."/>
            <person name="Lok S."/>
            <person name="Yuen K.-Y."/>
        </authorList>
    </citation>
    <scope>NUCLEOTIDE SEQUENCE [LARGE SCALE GENOMIC DNA]</scope>
    <source>
        <strain>HLHK9</strain>
    </source>
</reference>
<gene>
    <name evidence="1" type="primary">rpsD</name>
    <name type="ordered locus">LHK_00278</name>
</gene>
<organism>
    <name type="scientific">Laribacter hongkongensis (strain HLHK9)</name>
    <dbReference type="NCBI Taxonomy" id="557598"/>
    <lineage>
        <taxon>Bacteria</taxon>
        <taxon>Pseudomonadati</taxon>
        <taxon>Pseudomonadota</taxon>
        <taxon>Betaproteobacteria</taxon>
        <taxon>Neisseriales</taxon>
        <taxon>Aquaspirillaceae</taxon>
        <taxon>Laribacter</taxon>
    </lineage>
</organism>
<name>RS4_LARHH</name>
<comment type="function">
    <text evidence="1">One of the primary rRNA binding proteins, it binds directly to 16S rRNA where it nucleates assembly of the body of the 30S subunit.</text>
</comment>
<comment type="function">
    <text evidence="1">With S5 and S12 plays an important role in translational accuracy.</text>
</comment>
<comment type="subunit">
    <text evidence="1">Part of the 30S ribosomal subunit. Contacts protein S5. The interaction surface between S4 and S5 is involved in control of translational fidelity.</text>
</comment>
<comment type="similarity">
    <text evidence="1">Belongs to the universal ribosomal protein uS4 family.</text>
</comment>
<proteinExistence type="inferred from homology"/>
<keyword id="KW-1185">Reference proteome</keyword>
<keyword id="KW-0687">Ribonucleoprotein</keyword>
<keyword id="KW-0689">Ribosomal protein</keyword>
<keyword id="KW-0694">RNA-binding</keyword>
<keyword id="KW-0699">rRNA-binding</keyword>
<protein>
    <recommendedName>
        <fullName evidence="1">Small ribosomal subunit protein uS4</fullName>
    </recommendedName>
    <alternativeName>
        <fullName evidence="2">30S ribosomal protein S4</fullName>
    </alternativeName>
</protein>
<sequence>MARYTGPKCKLARREGTDLFLKSARRSIDSKCKLDSRPGQHGAKQPRLSDYGIHLREKQKIRRIYGVLERQFRKYFAEAERRKGSTGENLLQILESRLDNVVYRMGYGSTRAESRQLVSHKAIVVNGEVVNIPSYQVKAGDVVSVREKSKKQVRIAESLALAEQIGFPGWVSVDPKKMEGTFKNAPERSELSSDINEQLVVEFYSK</sequence>
<evidence type="ECO:0000255" key="1">
    <source>
        <dbReference type="HAMAP-Rule" id="MF_01306"/>
    </source>
</evidence>
<evidence type="ECO:0000305" key="2"/>